<organism>
    <name type="scientific">Salmonella typhi</name>
    <dbReference type="NCBI Taxonomy" id="90370"/>
    <lineage>
        <taxon>Bacteria</taxon>
        <taxon>Pseudomonadati</taxon>
        <taxon>Pseudomonadota</taxon>
        <taxon>Gammaproteobacteria</taxon>
        <taxon>Enterobacterales</taxon>
        <taxon>Enterobacteriaceae</taxon>
        <taxon>Salmonella</taxon>
    </lineage>
</organism>
<reference key="1">
    <citation type="journal article" date="2001" name="Nature">
        <title>Complete genome sequence of a multiple drug resistant Salmonella enterica serovar Typhi CT18.</title>
        <authorList>
            <person name="Parkhill J."/>
            <person name="Dougan G."/>
            <person name="James K.D."/>
            <person name="Thomson N.R."/>
            <person name="Pickard D."/>
            <person name="Wain J."/>
            <person name="Churcher C.M."/>
            <person name="Mungall K.L."/>
            <person name="Bentley S.D."/>
            <person name="Holden M.T.G."/>
            <person name="Sebaihia M."/>
            <person name="Baker S."/>
            <person name="Basham D."/>
            <person name="Brooks K."/>
            <person name="Chillingworth T."/>
            <person name="Connerton P."/>
            <person name="Cronin A."/>
            <person name="Davis P."/>
            <person name="Davies R.M."/>
            <person name="Dowd L."/>
            <person name="White N."/>
            <person name="Farrar J."/>
            <person name="Feltwell T."/>
            <person name="Hamlin N."/>
            <person name="Haque A."/>
            <person name="Hien T.T."/>
            <person name="Holroyd S."/>
            <person name="Jagels K."/>
            <person name="Krogh A."/>
            <person name="Larsen T.S."/>
            <person name="Leather S."/>
            <person name="Moule S."/>
            <person name="O'Gaora P."/>
            <person name="Parry C."/>
            <person name="Quail M.A."/>
            <person name="Rutherford K.M."/>
            <person name="Simmonds M."/>
            <person name="Skelton J."/>
            <person name="Stevens K."/>
            <person name="Whitehead S."/>
            <person name="Barrell B.G."/>
        </authorList>
    </citation>
    <scope>NUCLEOTIDE SEQUENCE [LARGE SCALE GENOMIC DNA]</scope>
    <source>
        <strain>CT18</strain>
    </source>
</reference>
<reference key="2">
    <citation type="journal article" date="2003" name="J. Bacteriol.">
        <title>Comparative genomics of Salmonella enterica serovar Typhi strains Ty2 and CT18.</title>
        <authorList>
            <person name="Deng W."/>
            <person name="Liou S.-R."/>
            <person name="Plunkett G. III"/>
            <person name="Mayhew G.F."/>
            <person name="Rose D.J."/>
            <person name="Burland V."/>
            <person name="Kodoyianni V."/>
            <person name="Schwartz D.C."/>
            <person name="Blattner F.R."/>
        </authorList>
    </citation>
    <scope>NUCLEOTIDE SEQUENCE [LARGE SCALE GENOMIC DNA]</scope>
    <source>
        <strain>ATCC 700931 / Ty2</strain>
    </source>
</reference>
<gene>
    <name evidence="1" type="primary">rhaR</name>
    <name type="ordered locus">STY3824</name>
    <name type="ordered locus">t3570</name>
</gene>
<keyword id="KW-0010">Activator</keyword>
<keyword id="KW-0963">Cytoplasm</keyword>
<keyword id="KW-0238">DNA-binding</keyword>
<keyword id="KW-0677">Repeat</keyword>
<keyword id="KW-0684">Rhamnose metabolism</keyword>
<keyword id="KW-0804">Transcription</keyword>
<keyword id="KW-0805">Transcription regulation</keyword>
<comment type="function">
    <text evidence="1">Activates expression of the rhaSR operon in response to L-rhamnose.</text>
</comment>
<comment type="subunit">
    <text evidence="1">Binds DNA as a dimer.</text>
</comment>
<comment type="subcellular location">
    <subcellularLocation>
        <location evidence="1">Cytoplasm</location>
    </subcellularLocation>
</comment>
<proteinExistence type="inferred from homology"/>
<dbReference type="EMBL" id="AL513382">
    <property type="protein sequence ID" value="CAD09575.1"/>
    <property type="molecule type" value="Genomic_DNA"/>
</dbReference>
<dbReference type="EMBL" id="AE014613">
    <property type="protein sequence ID" value="AAO71074.1"/>
    <property type="molecule type" value="Genomic_DNA"/>
</dbReference>
<dbReference type="RefSeq" id="NP_458001.1">
    <property type="nucleotide sequence ID" value="NC_003198.1"/>
</dbReference>
<dbReference type="RefSeq" id="WP_000013291.1">
    <property type="nucleotide sequence ID" value="NZ_WSUR01000010.1"/>
</dbReference>
<dbReference type="SMR" id="Q8Z2V5"/>
<dbReference type="STRING" id="220341.gene:17587686"/>
<dbReference type="KEGG" id="stt:t3570"/>
<dbReference type="KEGG" id="sty:STY3824"/>
<dbReference type="PATRIC" id="fig|220341.7.peg.3904"/>
<dbReference type="eggNOG" id="COG1917">
    <property type="taxonomic scope" value="Bacteria"/>
</dbReference>
<dbReference type="eggNOG" id="COG4977">
    <property type="taxonomic scope" value="Bacteria"/>
</dbReference>
<dbReference type="HOGENOM" id="CLU_000445_88_5_6"/>
<dbReference type="OMA" id="ECGFDDS"/>
<dbReference type="OrthoDB" id="2547276at2"/>
<dbReference type="Proteomes" id="UP000000541">
    <property type="component" value="Chromosome"/>
</dbReference>
<dbReference type="Proteomes" id="UP000002670">
    <property type="component" value="Chromosome"/>
</dbReference>
<dbReference type="GO" id="GO:0005737">
    <property type="term" value="C:cytoplasm"/>
    <property type="evidence" value="ECO:0007669"/>
    <property type="project" value="UniProtKB-SubCell"/>
</dbReference>
<dbReference type="GO" id="GO:0003700">
    <property type="term" value="F:DNA-binding transcription factor activity"/>
    <property type="evidence" value="ECO:0007669"/>
    <property type="project" value="UniProtKB-UniRule"/>
</dbReference>
<dbReference type="GO" id="GO:0043565">
    <property type="term" value="F:sequence-specific DNA binding"/>
    <property type="evidence" value="ECO:0007669"/>
    <property type="project" value="InterPro"/>
</dbReference>
<dbReference type="GO" id="GO:0045893">
    <property type="term" value="P:positive regulation of DNA-templated transcription"/>
    <property type="evidence" value="ECO:0007669"/>
    <property type="project" value="UniProtKB-UniRule"/>
</dbReference>
<dbReference type="GO" id="GO:0019299">
    <property type="term" value="P:rhamnose metabolic process"/>
    <property type="evidence" value="ECO:0007669"/>
    <property type="project" value="UniProtKB-UniRule"/>
</dbReference>
<dbReference type="CDD" id="cd06977">
    <property type="entry name" value="cupin_RhaR_RhaS-like_N"/>
    <property type="match status" value="1"/>
</dbReference>
<dbReference type="Gene3D" id="1.10.10.60">
    <property type="entry name" value="Homeodomain-like"/>
    <property type="match status" value="1"/>
</dbReference>
<dbReference type="Gene3D" id="2.60.120.10">
    <property type="entry name" value="Jelly Rolls"/>
    <property type="match status" value="1"/>
</dbReference>
<dbReference type="HAMAP" id="MF_01533">
    <property type="entry name" value="HTH_type_RhaR"/>
    <property type="match status" value="1"/>
</dbReference>
<dbReference type="InterPro" id="IPR003313">
    <property type="entry name" value="AraC-bd"/>
</dbReference>
<dbReference type="InterPro" id="IPR009057">
    <property type="entry name" value="Homeodomain-like_sf"/>
</dbReference>
<dbReference type="InterPro" id="IPR018060">
    <property type="entry name" value="HTH_AraC"/>
</dbReference>
<dbReference type="InterPro" id="IPR018062">
    <property type="entry name" value="HTH_AraC-typ_CS"/>
</dbReference>
<dbReference type="InterPro" id="IPR047220">
    <property type="entry name" value="RhaR_RhaS-like_N"/>
</dbReference>
<dbReference type="InterPro" id="IPR014710">
    <property type="entry name" value="RmlC-like_jellyroll"/>
</dbReference>
<dbReference type="InterPro" id="IPR011051">
    <property type="entry name" value="RmlC_Cupin_sf"/>
</dbReference>
<dbReference type="InterPro" id="IPR023699">
    <property type="entry name" value="Tscrpt_act_RhaR"/>
</dbReference>
<dbReference type="InterPro" id="IPR020449">
    <property type="entry name" value="Tscrpt_reg_AraC-type_HTH"/>
</dbReference>
<dbReference type="NCBIfam" id="NF010025">
    <property type="entry name" value="PRK13500.1"/>
    <property type="match status" value="1"/>
</dbReference>
<dbReference type="NCBIfam" id="NF010026">
    <property type="entry name" value="PRK13501.1"/>
    <property type="match status" value="1"/>
</dbReference>
<dbReference type="NCBIfam" id="NF010027">
    <property type="entry name" value="PRK13502.1"/>
    <property type="match status" value="1"/>
</dbReference>
<dbReference type="PANTHER" id="PTHR43280">
    <property type="entry name" value="ARAC-FAMILY TRANSCRIPTIONAL REGULATOR"/>
    <property type="match status" value="1"/>
</dbReference>
<dbReference type="PANTHER" id="PTHR43280:SF13">
    <property type="entry name" value="HTH-TYPE TRANSCRIPTIONAL ACTIVATOR RHAR"/>
    <property type="match status" value="1"/>
</dbReference>
<dbReference type="Pfam" id="PF02311">
    <property type="entry name" value="AraC_binding"/>
    <property type="match status" value="1"/>
</dbReference>
<dbReference type="Pfam" id="PF12833">
    <property type="entry name" value="HTH_18"/>
    <property type="match status" value="1"/>
</dbReference>
<dbReference type="PRINTS" id="PR00032">
    <property type="entry name" value="HTHARAC"/>
</dbReference>
<dbReference type="SMART" id="SM00342">
    <property type="entry name" value="HTH_ARAC"/>
    <property type="match status" value="1"/>
</dbReference>
<dbReference type="SUPFAM" id="SSF46689">
    <property type="entry name" value="Homeodomain-like"/>
    <property type="match status" value="1"/>
</dbReference>
<dbReference type="SUPFAM" id="SSF51182">
    <property type="entry name" value="RmlC-like cupins"/>
    <property type="match status" value="1"/>
</dbReference>
<dbReference type="PROSITE" id="PS00041">
    <property type="entry name" value="HTH_ARAC_FAMILY_1"/>
    <property type="match status" value="1"/>
</dbReference>
<dbReference type="PROSITE" id="PS01124">
    <property type="entry name" value="HTH_ARAC_FAMILY_2"/>
    <property type="match status" value="1"/>
</dbReference>
<accession>Q8Z2V5</accession>
<accession>Q7C6N0</accession>
<feature type="chain" id="PRO_0000194558" description="HTH-type transcriptional activator RhaR">
    <location>
        <begin position="1"/>
        <end position="282"/>
    </location>
</feature>
<feature type="domain" description="HTH araC/xylS-type" evidence="1">
    <location>
        <begin position="179"/>
        <end position="277"/>
    </location>
</feature>
<feature type="DNA-binding region" description="H-T-H motif" evidence="1">
    <location>
        <begin position="196"/>
        <end position="217"/>
    </location>
</feature>
<feature type="DNA-binding region" description="H-T-H motif" evidence="1">
    <location>
        <begin position="244"/>
        <end position="267"/>
    </location>
</feature>
<feature type="site" description="Interaction with sigma-70" evidence="1">
    <location>
        <position position="246"/>
    </location>
</feature>
<name>RHAR_SALTI</name>
<evidence type="ECO:0000255" key="1">
    <source>
        <dbReference type="HAMAP-Rule" id="MF_01533"/>
    </source>
</evidence>
<sequence>MANQLILLKKDFFTDEQQAVTVADRYPQDVFAEHTHEFCELVMVWRGNGLHVLNERPYRITRGDLFYIRAEDKHSYTSVNDLVLQNIIYCPERLKLNVNWQAMIPGFQGAQWHPHWRLGSMGMNQARQVINQLEHESNGRDPLANEMAELLFGQLVMTLKRHRYATDDLPATSRETLLDKLITALANSLECPFALDAFCQQEQCSERVLRQQFRAQTGMTINQYLRQVRICHAQYLLQHSPLMVSEISMQCGFEDSNYFSVVFTRETGMTPSQWRHLSNQSD</sequence>
<protein>
    <recommendedName>
        <fullName evidence="1">HTH-type transcriptional activator RhaR</fullName>
    </recommendedName>
    <alternativeName>
        <fullName evidence="1">L-rhamnose operon transcriptional activator RhaR</fullName>
    </alternativeName>
</protein>